<comment type="function">
    <text evidence="1">Together with the chaperonin GroEL, plays an essential role in assisting protein folding. The GroEL-GroES system forms a nano-cage that allows encapsulation of the non-native substrate proteins and provides a physical environment optimized to promote and accelerate protein folding. GroES binds to the apical surface of the GroEL ring, thereby capping the opening of the GroEL channel.</text>
</comment>
<comment type="subunit">
    <text evidence="1">Heptamer of 7 subunits arranged in a ring. Interacts with the chaperonin GroEL.</text>
</comment>
<comment type="subcellular location">
    <subcellularLocation>
        <location evidence="1">Cytoplasm</location>
    </subcellularLocation>
</comment>
<comment type="similarity">
    <text evidence="1">Belongs to the GroES chaperonin family.</text>
</comment>
<proteinExistence type="inferred from homology"/>
<protein>
    <recommendedName>
        <fullName evidence="1">Co-chaperonin GroES</fullName>
    </recommendedName>
    <alternativeName>
        <fullName evidence="1">10 kDa chaperonin</fullName>
    </alternativeName>
    <alternativeName>
        <fullName evidence="1">Chaperonin-10</fullName>
        <shortName evidence="1">Cpn10</shortName>
    </alternativeName>
</protein>
<accession>A4W5N7</accession>
<reference key="1">
    <citation type="journal article" date="2010" name="PLoS Genet.">
        <title>Genome sequence of the plant growth promoting endophytic bacterium Enterobacter sp. 638.</title>
        <authorList>
            <person name="Taghavi S."/>
            <person name="van der Lelie D."/>
            <person name="Hoffman A."/>
            <person name="Zhang Y.B."/>
            <person name="Walla M.D."/>
            <person name="Vangronsveld J."/>
            <person name="Newman L."/>
            <person name="Monchy S."/>
        </authorList>
    </citation>
    <scope>NUCLEOTIDE SEQUENCE [LARGE SCALE GENOMIC DNA]</scope>
    <source>
        <strain>638</strain>
    </source>
</reference>
<name>CH10_ENT38</name>
<keyword id="KW-0143">Chaperone</keyword>
<keyword id="KW-0963">Cytoplasm</keyword>
<gene>
    <name evidence="1" type="primary">groES</name>
    <name evidence="1" type="synonym">groS</name>
    <name type="ordered locus">Ent638_0329</name>
</gene>
<sequence>MSIRPLHDRVIVKRKEVETKSAGGIVLTGSAATKSTRGEIIAVGKGRILENGTVQPLDVKVGDIVIFNDGYGVKSEKIDNEEVLIMSESDILAIVEA</sequence>
<evidence type="ECO:0000255" key="1">
    <source>
        <dbReference type="HAMAP-Rule" id="MF_00580"/>
    </source>
</evidence>
<organism>
    <name type="scientific">Enterobacter sp. (strain 638)</name>
    <dbReference type="NCBI Taxonomy" id="399742"/>
    <lineage>
        <taxon>Bacteria</taxon>
        <taxon>Pseudomonadati</taxon>
        <taxon>Pseudomonadota</taxon>
        <taxon>Gammaproteobacteria</taxon>
        <taxon>Enterobacterales</taxon>
        <taxon>Enterobacteriaceae</taxon>
        <taxon>Enterobacter</taxon>
    </lineage>
</organism>
<feature type="chain" id="PRO_1000061189" description="Co-chaperonin GroES">
    <location>
        <begin position="1"/>
        <end position="97"/>
    </location>
</feature>
<dbReference type="EMBL" id="CP000653">
    <property type="protein sequence ID" value="ABP59017.1"/>
    <property type="molecule type" value="Genomic_DNA"/>
</dbReference>
<dbReference type="RefSeq" id="WP_011915590.1">
    <property type="nucleotide sequence ID" value="NC_009436.1"/>
</dbReference>
<dbReference type="SMR" id="A4W5N7"/>
<dbReference type="STRING" id="399742.Ent638_0329"/>
<dbReference type="GeneID" id="93307508"/>
<dbReference type="KEGG" id="ent:Ent638_0329"/>
<dbReference type="eggNOG" id="COG0234">
    <property type="taxonomic scope" value="Bacteria"/>
</dbReference>
<dbReference type="HOGENOM" id="CLU_132825_1_1_6"/>
<dbReference type="OrthoDB" id="9806791at2"/>
<dbReference type="Proteomes" id="UP000000230">
    <property type="component" value="Chromosome"/>
</dbReference>
<dbReference type="GO" id="GO:0005737">
    <property type="term" value="C:cytoplasm"/>
    <property type="evidence" value="ECO:0007669"/>
    <property type="project" value="UniProtKB-SubCell"/>
</dbReference>
<dbReference type="GO" id="GO:0005524">
    <property type="term" value="F:ATP binding"/>
    <property type="evidence" value="ECO:0007669"/>
    <property type="project" value="InterPro"/>
</dbReference>
<dbReference type="GO" id="GO:0046872">
    <property type="term" value="F:metal ion binding"/>
    <property type="evidence" value="ECO:0007669"/>
    <property type="project" value="TreeGrafter"/>
</dbReference>
<dbReference type="GO" id="GO:0044183">
    <property type="term" value="F:protein folding chaperone"/>
    <property type="evidence" value="ECO:0007669"/>
    <property type="project" value="InterPro"/>
</dbReference>
<dbReference type="GO" id="GO:0051087">
    <property type="term" value="F:protein-folding chaperone binding"/>
    <property type="evidence" value="ECO:0007669"/>
    <property type="project" value="TreeGrafter"/>
</dbReference>
<dbReference type="GO" id="GO:0051082">
    <property type="term" value="F:unfolded protein binding"/>
    <property type="evidence" value="ECO:0007669"/>
    <property type="project" value="TreeGrafter"/>
</dbReference>
<dbReference type="GO" id="GO:0051085">
    <property type="term" value="P:chaperone cofactor-dependent protein refolding"/>
    <property type="evidence" value="ECO:0007669"/>
    <property type="project" value="TreeGrafter"/>
</dbReference>
<dbReference type="CDD" id="cd00320">
    <property type="entry name" value="cpn10"/>
    <property type="match status" value="1"/>
</dbReference>
<dbReference type="FunFam" id="2.30.33.40:FF:000001">
    <property type="entry name" value="10 kDa chaperonin"/>
    <property type="match status" value="1"/>
</dbReference>
<dbReference type="Gene3D" id="2.30.33.40">
    <property type="entry name" value="GroES chaperonin"/>
    <property type="match status" value="1"/>
</dbReference>
<dbReference type="HAMAP" id="MF_00580">
    <property type="entry name" value="CH10"/>
    <property type="match status" value="1"/>
</dbReference>
<dbReference type="InterPro" id="IPR020818">
    <property type="entry name" value="Chaperonin_GroES"/>
</dbReference>
<dbReference type="InterPro" id="IPR037124">
    <property type="entry name" value="Chaperonin_GroES_sf"/>
</dbReference>
<dbReference type="InterPro" id="IPR018369">
    <property type="entry name" value="Chaprnonin_Cpn10_CS"/>
</dbReference>
<dbReference type="InterPro" id="IPR011032">
    <property type="entry name" value="GroES-like_sf"/>
</dbReference>
<dbReference type="NCBIfam" id="NF001526">
    <property type="entry name" value="PRK00364.1-1"/>
    <property type="match status" value="1"/>
</dbReference>
<dbReference type="NCBIfam" id="NF001527">
    <property type="entry name" value="PRK00364.1-2"/>
    <property type="match status" value="1"/>
</dbReference>
<dbReference type="NCBIfam" id="NF001531">
    <property type="entry name" value="PRK00364.2-2"/>
    <property type="match status" value="1"/>
</dbReference>
<dbReference type="PANTHER" id="PTHR10772">
    <property type="entry name" value="10 KDA HEAT SHOCK PROTEIN"/>
    <property type="match status" value="1"/>
</dbReference>
<dbReference type="PANTHER" id="PTHR10772:SF58">
    <property type="entry name" value="CO-CHAPERONIN GROES"/>
    <property type="match status" value="1"/>
</dbReference>
<dbReference type="Pfam" id="PF00166">
    <property type="entry name" value="Cpn10"/>
    <property type="match status" value="1"/>
</dbReference>
<dbReference type="PRINTS" id="PR00297">
    <property type="entry name" value="CHAPERONIN10"/>
</dbReference>
<dbReference type="SMART" id="SM00883">
    <property type="entry name" value="Cpn10"/>
    <property type="match status" value="1"/>
</dbReference>
<dbReference type="SUPFAM" id="SSF50129">
    <property type="entry name" value="GroES-like"/>
    <property type="match status" value="1"/>
</dbReference>
<dbReference type="PROSITE" id="PS00681">
    <property type="entry name" value="CHAPERONINS_CPN10"/>
    <property type="match status" value="1"/>
</dbReference>